<accession>Q6NU21</accession>
<protein>
    <recommendedName>
        <fullName>Serine/threonine-protein kinase TAO1-A</fullName>
        <ecNumber>2.7.11.1</ecNumber>
    </recommendedName>
    <alternativeName>
        <fullName>Thousand and one amino acid protein 1-A</fullName>
    </alternativeName>
</protein>
<gene>
    <name type="primary">taok1-a</name>
</gene>
<name>TAO1A_XENLA</name>
<keyword id="KW-0067">ATP-binding</keyword>
<keyword id="KW-0131">Cell cycle</keyword>
<keyword id="KW-0132">Cell division</keyword>
<keyword id="KW-0175">Coiled coil</keyword>
<keyword id="KW-0963">Cytoplasm</keyword>
<keyword id="KW-0227">DNA damage</keyword>
<keyword id="KW-0234">DNA repair</keyword>
<keyword id="KW-0418">Kinase</keyword>
<keyword id="KW-0547">Nucleotide-binding</keyword>
<keyword id="KW-1185">Reference proteome</keyword>
<keyword id="KW-0723">Serine/threonine-protein kinase</keyword>
<keyword id="KW-0808">Transferase</keyword>
<reference key="1">
    <citation type="submission" date="2004-04" db="EMBL/GenBank/DDBJ databases">
        <authorList>
            <consortium name="NIH - Xenopus Gene Collection (XGC) project"/>
        </authorList>
    </citation>
    <scope>NUCLEOTIDE SEQUENCE [LARGE SCALE MRNA]</scope>
    <source>
        <tissue>Embryo</tissue>
    </source>
</reference>
<comment type="function">
    <text evidence="1">Serine/threonine-protein kinase involved in various processes such as p38/mapk14 stress-activated MAPK cascade, DNA damage response and regulation of cytoskeleton stability. Acts as an activator of the p38/MAPK14 stress-activated MAPK cascade by mediating phosphorylation and subsequent activation of upstream MAP kinase kinases. In response to DNA damage, involved in the G2/M transition DNA damage checkpoint by activating the p38/MAPK14 stress-activated MAPK cascade (By similarity).</text>
</comment>
<comment type="catalytic activity">
    <reaction>
        <text>L-seryl-[protein] + ATP = O-phospho-L-seryl-[protein] + ADP + H(+)</text>
        <dbReference type="Rhea" id="RHEA:17989"/>
        <dbReference type="Rhea" id="RHEA-COMP:9863"/>
        <dbReference type="Rhea" id="RHEA-COMP:11604"/>
        <dbReference type="ChEBI" id="CHEBI:15378"/>
        <dbReference type="ChEBI" id="CHEBI:29999"/>
        <dbReference type="ChEBI" id="CHEBI:30616"/>
        <dbReference type="ChEBI" id="CHEBI:83421"/>
        <dbReference type="ChEBI" id="CHEBI:456216"/>
        <dbReference type="EC" id="2.7.11.1"/>
    </reaction>
</comment>
<comment type="catalytic activity">
    <reaction>
        <text>L-threonyl-[protein] + ATP = O-phospho-L-threonyl-[protein] + ADP + H(+)</text>
        <dbReference type="Rhea" id="RHEA:46608"/>
        <dbReference type="Rhea" id="RHEA-COMP:11060"/>
        <dbReference type="Rhea" id="RHEA-COMP:11605"/>
        <dbReference type="ChEBI" id="CHEBI:15378"/>
        <dbReference type="ChEBI" id="CHEBI:30013"/>
        <dbReference type="ChEBI" id="CHEBI:30616"/>
        <dbReference type="ChEBI" id="CHEBI:61977"/>
        <dbReference type="ChEBI" id="CHEBI:456216"/>
        <dbReference type="EC" id="2.7.11.1"/>
    </reaction>
</comment>
<comment type="subcellular location">
    <subcellularLocation>
        <location evidence="1">Cytoplasm</location>
    </subcellularLocation>
</comment>
<comment type="similarity">
    <text evidence="6">Belongs to the protein kinase superfamily. STE Ser/Thr protein kinase family. STE20 subfamily.</text>
</comment>
<proteinExistence type="evidence at transcript level"/>
<sequence length="1001" mass="115910">MPSTSRAGSLKDQDIAELFFRDDPEKLFSDLREIGHGSFGAVYFAHDASTREVVAIKKMSYSGKQSNEKWQDIVKEVKFLQRIKHPNSIEYKGCYLREHTAWLVMEYCLGSASDLLEVHKKPLQEIEIAAITHGALQGLAYLHSHNLIHRDIKAGNILLTEPGQVKLADFGSASIASPANSFVGTPYWMAPEVILAMDEGQYDGKVDVWSLGITCIELAERKPPLFNMNAMSALYHIAQNESPTLQSNEWSDFFRNFVDSCLQKIPQDRPTSDELLKNMFVLLERPETVLIDLIQRTKDAVRELDNLQYRKMKKLLFQEAHNGPAVETHEEEEEQEHGVGRTGTVNSIGSNQSIPSMSISASSQSSSVTSLPDASDDKSELDMMEGDHTVMSNSSVIHLKPEEENYPEEPEPRTRPSEPHSPPQVSRHKSHYRNREHFATIRTASLVTRQIQEHEQDSELREQMSGYKRMRRQHQKQLMALENKLKAEMDEHRLRLDKDLETQRNNFSAEMEKLVKKHQAAMEKELKSIANDEKKFQQHIQAQQKKELNNFLESQKREYKLRKEQLKEELNENQSTPKKEKQEWLSKQKENFQHFQAEEEANLLRRQRQYLDLECRRFKRRMLLNRHNSEQDLVREELNKRQTQKDLEHAMLLRQHESMQELEFRHLNTIQKMRCELIKLQHQTELTNQLEYNKRRERELRRKHVMEVRQQPKSLKSKELQIKKQFQDTCKIQTRQYKALRNHLLDTTPKNEHKAVLKRLKEEQTRKLAILAEQYDHSINEMLSTQALRLDEAQEAECQVLKMQLQQELELLNAYQSKIKMQAEAQHEREIHELEQRVSLHRGLLEQKIEEEMLALQNERTERIRSLLERQAREIEAFDSESMRLGFSNMILSNLSPEAFSHSYPGASGWSHNPTGGPGPHWGHPMAGPPQAWGHPMQGGPQPWGHPSGSVQGVSRGSTMGVRNSPQALRRTASGGQTEQGMSRSTSVTSQISNGSRMSYT</sequence>
<evidence type="ECO:0000250" key="1"/>
<evidence type="ECO:0000255" key="2"/>
<evidence type="ECO:0000255" key="3">
    <source>
        <dbReference type="PROSITE-ProRule" id="PRU00159"/>
    </source>
</evidence>
<evidence type="ECO:0000255" key="4">
    <source>
        <dbReference type="PROSITE-ProRule" id="PRU10027"/>
    </source>
</evidence>
<evidence type="ECO:0000256" key="5">
    <source>
        <dbReference type="SAM" id="MobiDB-lite"/>
    </source>
</evidence>
<evidence type="ECO:0000305" key="6"/>
<dbReference type="EC" id="2.7.11.1"/>
<dbReference type="EMBL" id="BC068781">
    <property type="protein sequence ID" value="AAH68781.1"/>
    <property type="molecule type" value="mRNA"/>
</dbReference>
<dbReference type="RefSeq" id="NP_001084574.1">
    <property type="nucleotide sequence ID" value="NM_001091105.1"/>
</dbReference>
<dbReference type="SMR" id="Q6NU21"/>
<dbReference type="DNASU" id="414526"/>
<dbReference type="GeneID" id="414526"/>
<dbReference type="KEGG" id="xla:414526"/>
<dbReference type="AGR" id="Xenbase:XB-GENE-17333323"/>
<dbReference type="CTD" id="414526"/>
<dbReference type="Xenbase" id="XB-GENE-17333323">
    <property type="gene designation" value="taok1.L"/>
</dbReference>
<dbReference type="OrthoDB" id="10016527at2759"/>
<dbReference type="Proteomes" id="UP000186698">
    <property type="component" value="Chromosome 2L"/>
</dbReference>
<dbReference type="Bgee" id="414526">
    <property type="expression patterns" value="Expressed in blastula and 16 other cell types or tissues"/>
</dbReference>
<dbReference type="GO" id="GO:0005737">
    <property type="term" value="C:cytoplasm"/>
    <property type="evidence" value="ECO:0000318"/>
    <property type="project" value="GO_Central"/>
</dbReference>
<dbReference type="GO" id="GO:0005524">
    <property type="term" value="F:ATP binding"/>
    <property type="evidence" value="ECO:0007669"/>
    <property type="project" value="UniProtKB-KW"/>
</dbReference>
<dbReference type="GO" id="GO:0106310">
    <property type="term" value="F:protein serine kinase activity"/>
    <property type="evidence" value="ECO:0007669"/>
    <property type="project" value="RHEA"/>
</dbReference>
<dbReference type="GO" id="GO:0004674">
    <property type="term" value="F:protein serine/threonine kinase activity"/>
    <property type="evidence" value="ECO:0000250"/>
    <property type="project" value="UniProtKB"/>
</dbReference>
<dbReference type="GO" id="GO:0051301">
    <property type="term" value="P:cell division"/>
    <property type="evidence" value="ECO:0007669"/>
    <property type="project" value="UniProtKB-KW"/>
</dbReference>
<dbReference type="GO" id="GO:0006974">
    <property type="term" value="P:DNA damage response"/>
    <property type="evidence" value="ECO:0000250"/>
    <property type="project" value="UniProtKB"/>
</dbReference>
<dbReference type="GO" id="GO:0006281">
    <property type="term" value="P:DNA repair"/>
    <property type="evidence" value="ECO:0007669"/>
    <property type="project" value="UniProtKB-KW"/>
</dbReference>
<dbReference type="GO" id="GO:0097194">
    <property type="term" value="P:execution phase of apoptosis"/>
    <property type="evidence" value="ECO:0000250"/>
    <property type="project" value="UniProtKB"/>
</dbReference>
<dbReference type="GO" id="GO:0007095">
    <property type="term" value="P:mitotic G2 DNA damage checkpoint signaling"/>
    <property type="evidence" value="ECO:0000250"/>
    <property type="project" value="UniProtKB"/>
</dbReference>
<dbReference type="GO" id="GO:0046330">
    <property type="term" value="P:positive regulation of JNK cascade"/>
    <property type="evidence" value="ECO:0000250"/>
    <property type="project" value="UniProtKB"/>
</dbReference>
<dbReference type="GO" id="GO:0032874">
    <property type="term" value="P:positive regulation of stress-activated MAPK cascade"/>
    <property type="evidence" value="ECO:0000250"/>
    <property type="project" value="UniProtKB"/>
</dbReference>
<dbReference type="GO" id="GO:0051493">
    <property type="term" value="P:regulation of cytoskeleton organization"/>
    <property type="evidence" value="ECO:0000250"/>
    <property type="project" value="UniProtKB"/>
</dbReference>
<dbReference type="FunFam" id="1.10.510.10:FF:000030">
    <property type="entry name" value="Serine/threonine-protein kinase TAO2, putative"/>
    <property type="match status" value="1"/>
</dbReference>
<dbReference type="FunFam" id="3.30.200.20:FF:000029">
    <property type="entry name" value="Serine/threonine-protein kinase TAO2, putative"/>
    <property type="match status" value="1"/>
</dbReference>
<dbReference type="Gene3D" id="3.30.200.20">
    <property type="entry name" value="Phosphorylase Kinase, domain 1"/>
    <property type="match status" value="1"/>
</dbReference>
<dbReference type="Gene3D" id="1.10.510.10">
    <property type="entry name" value="Transferase(Phosphotransferase) domain 1"/>
    <property type="match status" value="1"/>
</dbReference>
<dbReference type="InterPro" id="IPR011009">
    <property type="entry name" value="Kinase-like_dom_sf"/>
</dbReference>
<dbReference type="InterPro" id="IPR000719">
    <property type="entry name" value="Prot_kinase_dom"/>
</dbReference>
<dbReference type="InterPro" id="IPR017441">
    <property type="entry name" value="Protein_kinase_ATP_BS"/>
</dbReference>
<dbReference type="InterPro" id="IPR008271">
    <property type="entry name" value="Ser/Thr_kinase_AS"/>
</dbReference>
<dbReference type="InterPro" id="IPR051234">
    <property type="entry name" value="TAO_STE20_kinase"/>
</dbReference>
<dbReference type="PANTHER" id="PTHR47167">
    <property type="entry name" value="SERINE/THREONINE-PROTEIN KINASE TAO1-LIKE PROTEIN"/>
    <property type="match status" value="1"/>
</dbReference>
<dbReference type="PANTHER" id="PTHR47167:SF8">
    <property type="entry name" value="SERINE_THREONINE-PROTEIN KINASE TAO1"/>
    <property type="match status" value="1"/>
</dbReference>
<dbReference type="Pfam" id="PF00069">
    <property type="entry name" value="Pkinase"/>
    <property type="match status" value="1"/>
</dbReference>
<dbReference type="SMART" id="SM00220">
    <property type="entry name" value="S_TKc"/>
    <property type="match status" value="1"/>
</dbReference>
<dbReference type="SUPFAM" id="SSF56112">
    <property type="entry name" value="Protein kinase-like (PK-like)"/>
    <property type="match status" value="1"/>
</dbReference>
<dbReference type="PROSITE" id="PS00107">
    <property type="entry name" value="PROTEIN_KINASE_ATP"/>
    <property type="match status" value="1"/>
</dbReference>
<dbReference type="PROSITE" id="PS50011">
    <property type="entry name" value="PROTEIN_KINASE_DOM"/>
    <property type="match status" value="1"/>
</dbReference>
<dbReference type="PROSITE" id="PS00108">
    <property type="entry name" value="PROTEIN_KINASE_ST"/>
    <property type="match status" value="1"/>
</dbReference>
<organism>
    <name type="scientific">Xenopus laevis</name>
    <name type="common">African clawed frog</name>
    <dbReference type="NCBI Taxonomy" id="8355"/>
    <lineage>
        <taxon>Eukaryota</taxon>
        <taxon>Metazoa</taxon>
        <taxon>Chordata</taxon>
        <taxon>Craniata</taxon>
        <taxon>Vertebrata</taxon>
        <taxon>Euteleostomi</taxon>
        <taxon>Amphibia</taxon>
        <taxon>Batrachia</taxon>
        <taxon>Anura</taxon>
        <taxon>Pipoidea</taxon>
        <taxon>Pipidae</taxon>
        <taxon>Xenopodinae</taxon>
        <taxon>Xenopus</taxon>
        <taxon>Xenopus</taxon>
    </lineage>
</organism>
<feature type="chain" id="PRO_0000086731" description="Serine/threonine-protein kinase TAO1-A">
    <location>
        <begin position="1"/>
        <end position="1001"/>
    </location>
</feature>
<feature type="domain" description="Protein kinase" evidence="3">
    <location>
        <begin position="28"/>
        <end position="281"/>
    </location>
</feature>
<feature type="region of interest" description="Disordered" evidence="5">
    <location>
        <begin position="324"/>
        <end position="431"/>
    </location>
</feature>
<feature type="region of interest" description="Disordered" evidence="5">
    <location>
        <begin position="567"/>
        <end position="586"/>
    </location>
</feature>
<feature type="region of interest" description="Disordered" evidence="5">
    <location>
        <begin position="911"/>
        <end position="1001"/>
    </location>
</feature>
<feature type="coiled-coil region" evidence="2">
    <location>
        <begin position="458"/>
        <end position="651"/>
    </location>
</feature>
<feature type="coiled-coil region" evidence="2">
    <location>
        <begin position="754"/>
        <end position="877"/>
    </location>
</feature>
<feature type="compositionally biased region" description="Low complexity" evidence="5">
    <location>
        <begin position="350"/>
        <end position="370"/>
    </location>
</feature>
<feature type="compositionally biased region" description="Basic and acidic residues" evidence="5">
    <location>
        <begin position="375"/>
        <end position="388"/>
    </location>
</feature>
<feature type="compositionally biased region" description="Basic and acidic residues" evidence="5">
    <location>
        <begin position="577"/>
        <end position="586"/>
    </location>
</feature>
<feature type="compositionally biased region" description="Low complexity" evidence="5">
    <location>
        <begin position="921"/>
        <end position="930"/>
    </location>
</feature>
<feature type="compositionally biased region" description="Polar residues" evidence="5">
    <location>
        <begin position="949"/>
        <end position="967"/>
    </location>
</feature>
<feature type="compositionally biased region" description="Polar residues" evidence="5">
    <location>
        <begin position="974"/>
        <end position="1001"/>
    </location>
</feature>
<feature type="active site" description="Proton acceptor" evidence="3 4">
    <location>
        <position position="151"/>
    </location>
</feature>
<feature type="binding site" evidence="3">
    <location>
        <begin position="34"/>
        <end position="42"/>
    </location>
    <ligand>
        <name>ATP</name>
        <dbReference type="ChEBI" id="CHEBI:30616"/>
    </ligand>
</feature>
<feature type="binding site" evidence="3">
    <location>
        <position position="57"/>
    </location>
    <ligand>
        <name>ATP</name>
        <dbReference type="ChEBI" id="CHEBI:30616"/>
    </ligand>
</feature>